<accession>Q14GL3</accession>
<comment type="function">
    <text evidence="1">DNA ligase that catalyzes the formation of phosphodiester linkages between 5'-phosphoryl and 3'-hydroxyl groups in double-stranded DNA using NAD as a coenzyme and as the energy source for the reaction. It is essential for DNA replication and repair of damaged DNA.</text>
</comment>
<comment type="catalytic activity">
    <reaction evidence="1">
        <text>NAD(+) + (deoxyribonucleotide)n-3'-hydroxyl + 5'-phospho-(deoxyribonucleotide)m = (deoxyribonucleotide)n+m + AMP + beta-nicotinamide D-nucleotide.</text>
        <dbReference type="EC" id="6.5.1.2"/>
    </reaction>
</comment>
<comment type="cofactor">
    <cofactor evidence="1">
        <name>Mg(2+)</name>
        <dbReference type="ChEBI" id="CHEBI:18420"/>
    </cofactor>
    <cofactor evidence="1">
        <name>Mn(2+)</name>
        <dbReference type="ChEBI" id="CHEBI:29035"/>
    </cofactor>
</comment>
<comment type="similarity">
    <text evidence="1">Belongs to the NAD-dependent DNA ligase family. LigA subfamily.</text>
</comment>
<gene>
    <name evidence="1" type="primary">ligA</name>
    <name type="ordered locus">FTF1387c</name>
</gene>
<feature type="chain" id="PRO_0000313242" description="DNA ligase">
    <location>
        <begin position="1"/>
        <end position="678"/>
    </location>
</feature>
<feature type="domain" description="BRCT" evidence="1">
    <location>
        <begin position="602"/>
        <end position="678"/>
    </location>
</feature>
<feature type="active site" description="N6-AMP-lysine intermediate" evidence="1">
    <location>
        <position position="124"/>
    </location>
</feature>
<feature type="binding site" evidence="1">
    <location>
        <begin position="47"/>
        <end position="51"/>
    </location>
    <ligand>
        <name>NAD(+)</name>
        <dbReference type="ChEBI" id="CHEBI:57540"/>
    </ligand>
</feature>
<feature type="binding site" evidence="1">
    <location>
        <begin position="96"/>
        <end position="97"/>
    </location>
    <ligand>
        <name>NAD(+)</name>
        <dbReference type="ChEBI" id="CHEBI:57540"/>
    </ligand>
</feature>
<feature type="binding site" evidence="1">
    <location>
        <position position="122"/>
    </location>
    <ligand>
        <name>NAD(+)</name>
        <dbReference type="ChEBI" id="CHEBI:57540"/>
    </ligand>
</feature>
<feature type="binding site" evidence="1">
    <location>
        <position position="145"/>
    </location>
    <ligand>
        <name>NAD(+)</name>
        <dbReference type="ChEBI" id="CHEBI:57540"/>
    </ligand>
</feature>
<feature type="binding site" evidence="1">
    <location>
        <position position="182"/>
    </location>
    <ligand>
        <name>NAD(+)</name>
        <dbReference type="ChEBI" id="CHEBI:57540"/>
    </ligand>
</feature>
<feature type="binding site" evidence="1">
    <location>
        <position position="300"/>
    </location>
    <ligand>
        <name>NAD(+)</name>
        <dbReference type="ChEBI" id="CHEBI:57540"/>
    </ligand>
</feature>
<feature type="binding site" evidence="1">
    <location>
        <position position="324"/>
    </location>
    <ligand>
        <name>NAD(+)</name>
        <dbReference type="ChEBI" id="CHEBI:57540"/>
    </ligand>
</feature>
<feature type="binding site" evidence="1">
    <location>
        <position position="418"/>
    </location>
    <ligand>
        <name>Zn(2+)</name>
        <dbReference type="ChEBI" id="CHEBI:29105"/>
    </ligand>
</feature>
<feature type="binding site" evidence="1">
    <location>
        <position position="421"/>
    </location>
    <ligand>
        <name>Zn(2+)</name>
        <dbReference type="ChEBI" id="CHEBI:29105"/>
    </ligand>
</feature>
<feature type="binding site" evidence="1">
    <location>
        <position position="436"/>
    </location>
    <ligand>
        <name>Zn(2+)</name>
        <dbReference type="ChEBI" id="CHEBI:29105"/>
    </ligand>
</feature>
<feature type="binding site" evidence="1">
    <location>
        <position position="442"/>
    </location>
    <ligand>
        <name>Zn(2+)</name>
        <dbReference type="ChEBI" id="CHEBI:29105"/>
    </ligand>
</feature>
<protein>
    <recommendedName>
        <fullName evidence="1">DNA ligase</fullName>
        <ecNumber evidence="1">6.5.1.2</ecNumber>
    </recommendedName>
    <alternativeName>
        <fullName evidence="1">Polydeoxyribonucleotide synthase [NAD(+)]</fullName>
    </alternativeName>
</protein>
<proteinExistence type="inferred from homology"/>
<keyword id="KW-0227">DNA damage</keyword>
<keyword id="KW-0234">DNA repair</keyword>
<keyword id="KW-0235">DNA replication</keyword>
<keyword id="KW-0436">Ligase</keyword>
<keyword id="KW-0460">Magnesium</keyword>
<keyword id="KW-0464">Manganese</keyword>
<keyword id="KW-0479">Metal-binding</keyword>
<keyword id="KW-0520">NAD</keyword>
<keyword id="KW-0862">Zinc</keyword>
<name>DNLJ_FRAT1</name>
<dbReference type="EC" id="6.5.1.2" evidence="1"/>
<dbReference type="EMBL" id="AM286280">
    <property type="protein sequence ID" value="CAL09403.1"/>
    <property type="molecule type" value="Genomic_DNA"/>
</dbReference>
<dbReference type="RefSeq" id="WP_003024021.1">
    <property type="nucleotide sequence ID" value="NC_008245.1"/>
</dbReference>
<dbReference type="SMR" id="Q14GL3"/>
<dbReference type="KEGG" id="ftf:FTF1387c"/>
<dbReference type="HOGENOM" id="CLU_007764_2_1_6"/>
<dbReference type="GO" id="GO:0005829">
    <property type="term" value="C:cytosol"/>
    <property type="evidence" value="ECO:0007669"/>
    <property type="project" value="TreeGrafter"/>
</dbReference>
<dbReference type="GO" id="GO:0003677">
    <property type="term" value="F:DNA binding"/>
    <property type="evidence" value="ECO:0007669"/>
    <property type="project" value="InterPro"/>
</dbReference>
<dbReference type="GO" id="GO:0003911">
    <property type="term" value="F:DNA ligase (NAD+) activity"/>
    <property type="evidence" value="ECO:0007669"/>
    <property type="project" value="UniProtKB-UniRule"/>
</dbReference>
<dbReference type="GO" id="GO:0046872">
    <property type="term" value="F:metal ion binding"/>
    <property type="evidence" value="ECO:0007669"/>
    <property type="project" value="UniProtKB-KW"/>
</dbReference>
<dbReference type="GO" id="GO:0006281">
    <property type="term" value="P:DNA repair"/>
    <property type="evidence" value="ECO:0007669"/>
    <property type="project" value="UniProtKB-KW"/>
</dbReference>
<dbReference type="GO" id="GO:0006260">
    <property type="term" value="P:DNA replication"/>
    <property type="evidence" value="ECO:0007669"/>
    <property type="project" value="UniProtKB-KW"/>
</dbReference>
<dbReference type="CDD" id="cd17748">
    <property type="entry name" value="BRCT_DNA_ligase_like"/>
    <property type="match status" value="1"/>
</dbReference>
<dbReference type="CDD" id="cd00114">
    <property type="entry name" value="LIGANc"/>
    <property type="match status" value="1"/>
</dbReference>
<dbReference type="FunFam" id="1.10.150.20:FF:000007">
    <property type="entry name" value="DNA ligase"/>
    <property type="match status" value="1"/>
</dbReference>
<dbReference type="FunFam" id="2.40.50.140:FF:000012">
    <property type="entry name" value="DNA ligase"/>
    <property type="match status" value="1"/>
</dbReference>
<dbReference type="FunFam" id="3.30.470.30:FF:000001">
    <property type="entry name" value="DNA ligase"/>
    <property type="match status" value="1"/>
</dbReference>
<dbReference type="Gene3D" id="6.20.10.30">
    <property type="match status" value="1"/>
</dbReference>
<dbReference type="Gene3D" id="1.10.150.20">
    <property type="entry name" value="5' to 3' exonuclease, C-terminal subdomain"/>
    <property type="match status" value="2"/>
</dbReference>
<dbReference type="Gene3D" id="3.40.50.10190">
    <property type="entry name" value="BRCT domain"/>
    <property type="match status" value="1"/>
</dbReference>
<dbReference type="Gene3D" id="3.30.470.30">
    <property type="entry name" value="DNA ligase/mRNA capping enzyme"/>
    <property type="match status" value="1"/>
</dbReference>
<dbReference type="Gene3D" id="1.10.287.610">
    <property type="entry name" value="Helix hairpin bin"/>
    <property type="match status" value="1"/>
</dbReference>
<dbReference type="Gene3D" id="2.40.50.140">
    <property type="entry name" value="Nucleic acid-binding proteins"/>
    <property type="match status" value="1"/>
</dbReference>
<dbReference type="HAMAP" id="MF_01588">
    <property type="entry name" value="DNA_ligase_A"/>
    <property type="match status" value="1"/>
</dbReference>
<dbReference type="InterPro" id="IPR001357">
    <property type="entry name" value="BRCT_dom"/>
</dbReference>
<dbReference type="InterPro" id="IPR036420">
    <property type="entry name" value="BRCT_dom_sf"/>
</dbReference>
<dbReference type="InterPro" id="IPR041663">
    <property type="entry name" value="DisA/LigA_HHH"/>
</dbReference>
<dbReference type="InterPro" id="IPR001679">
    <property type="entry name" value="DNA_ligase"/>
</dbReference>
<dbReference type="InterPro" id="IPR033136">
    <property type="entry name" value="DNA_ligase_CS"/>
</dbReference>
<dbReference type="InterPro" id="IPR013839">
    <property type="entry name" value="DNAligase_adenylation"/>
</dbReference>
<dbReference type="InterPro" id="IPR013840">
    <property type="entry name" value="DNAligase_N"/>
</dbReference>
<dbReference type="InterPro" id="IPR003583">
    <property type="entry name" value="Hlx-hairpin-Hlx_DNA-bd_motif"/>
</dbReference>
<dbReference type="InterPro" id="IPR012340">
    <property type="entry name" value="NA-bd_OB-fold"/>
</dbReference>
<dbReference type="InterPro" id="IPR004150">
    <property type="entry name" value="NAD_DNA_ligase_OB"/>
</dbReference>
<dbReference type="InterPro" id="IPR010994">
    <property type="entry name" value="RuvA_2-like"/>
</dbReference>
<dbReference type="InterPro" id="IPR004149">
    <property type="entry name" value="Znf_DNAligase_C4"/>
</dbReference>
<dbReference type="NCBIfam" id="TIGR00575">
    <property type="entry name" value="dnlj"/>
    <property type="match status" value="1"/>
</dbReference>
<dbReference type="NCBIfam" id="NF005932">
    <property type="entry name" value="PRK07956.1"/>
    <property type="match status" value="1"/>
</dbReference>
<dbReference type="PANTHER" id="PTHR23389">
    <property type="entry name" value="CHROMOSOME TRANSMISSION FIDELITY FACTOR 18"/>
    <property type="match status" value="1"/>
</dbReference>
<dbReference type="PANTHER" id="PTHR23389:SF9">
    <property type="entry name" value="DNA LIGASE"/>
    <property type="match status" value="1"/>
</dbReference>
<dbReference type="Pfam" id="PF00533">
    <property type="entry name" value="BRCT"/>
    <property type="match status" value="1"/>
</dbReference>
<dbReference type="Pfam" id="PF01653">
    <property type="entry name" value="DNA_ligase_aden"/>
    <property type="match status" value="1"/>
</dbReference>
<dbReference type="Pfam" id="PF03120">
    <property type="entry name" value="DNA_ligase_OB"/>
    <property type="match status" value="1"/>
</dbReference>
<dbReference type="Pfam" id="PF03119">
    <property type="entry name" value="DNA_ligase_ZBD"/>
    <property type="match status" value="1"/>
</dbReference>
<dbReference type="Pfam" id="PF12826">
    <property type="entry name" value="HHH_2"/>
    <property type="match status" value="1"/>
</dbReference>
<dbReference type="Pfam" id="PF22745">
    <property type="entry name" value="Nlig-Ia"/>
    <property type="match status" value="1"/>
</dbReference>
<dbReference type="PIRSF" id="PIRSF001604">
    <property type="entry name" value="LigA"/>
    <property type="match status" value="1"/>
</dbReference>
<dbReference type="SMART" id="SM00292">
    <property type="entry name" value="BRCT"/>
    <property type="match status" value="1"/>
</dbReference>
<dbReference type="SMART" id="SM00278">
    <property type="entry name" value="HhH1"/>
    <property type="match status" value="4"/>
</dbReference>
<dbReference type="SMART" id="SM00532">
    <property type="entry name" value="LIGANc"/>
    <property type="match status" value="1"/>
</dbReference>
<dbReference type="SUPFAM" id="SSF52113">
    <property type="entry name" value="BRCT domain"/>
    <property type="match status" value="1"/>
</dbReference>
<dbReference type="SUPFAM" id="SSF56091">
    <property type="entry name" value="DNA ligase/mRNA capping enzyme, catalytic domain"/>
    <property type="match status" value="1"/>
</dbReference>
<dbReference type="SUPFAM" id="SSF50249">
    <property type="entry name" value="Nucleic acid-binding proteins"/>
    <property type="match status" value="1"/>
</dbReference>
<dbReference type="SUPFAM" id="SSF47781">
    <property type="entry name" value="RuvA domain 2-like"/>
    <property type="match status" value="1"/>
</dbReference>
<dbReference type="PROSITE" id="PS50172">
    <property type="entry name" value="BRCT"/>
    <property type="match status" value="1"/>
</dbReference>
<dbReference type="PROSITE" id="PS01056">
    <property type="entry name" value="DNA_LIGASE_N2"/>
    <property type="match status" value="1"/>
</dbReference>
<organism>
    <name type="scientific">Francisella tularensis subsp. tularensis (strain FSC 198)</name>
    <dbReference type="NCBI Taxonomy" id="393115"/>
    <lineage>
        <taxon>Bacteria</taxon>
        <taxon>Pseudomonadati</taxon>
        <taxon>Pseudomonadota</taxon>
        <taxon>Gammaproteobacteria</taxon>
        <taxon>Thiotrichales</taxon>
        <taxon>Francisellaceae</taxon>
        <taxon>Francisella</taxon>
    </lineage>
</organism>
<sequence>MTPNEFFSIKYHILAKAELKAYIDKLADYLSQQSYLYHTLDKPIISDSDYDKLFRLLQDLVNDNPQFKPINSVLDRVGGEVLAGFETIKHKKKMTSLANVFSLEELRDFYDKIEYDIELECEPKMDGLAISIFYKNGKFDYAVTRGDGIQGEKVSENVKTIRNVPLKLNTSNPPEELEVRGEIILDKQSFLSLNEYMQTHENKTFANPRNAAAGSIRMLDSKVVAKRPLKLYSYGIGYFSKDFVYPETQFELMQLLQSFGFTISDNMFLAKNFSEVEEYHHKMSHQRADLAYDIDGLVFKVNNIKLQDTIGYTARGPKWAIAYKFPAEEVESEVLNVEFQVGRTGAITPVARLKPVAVGGVIVSNATLHNINEIKRKDIRVGDRVIVRRAGDVIPEVVKSLPQYRKSDAQMVEMPTNCPVCDSKIENVNDQAIYRCTGGWHCQAQTTERLKHFVSRKAMDIDKLGAKLIEQLVAANLIKYPADIYKLNFEQLTGLERMAAKSSQNVLDSITKSKEPSLARFIFAIGIKDIGEVSSDALANHFGSLESFRDAKFEELIEINDIGEIMANNIVSFWHDSLNIKIVEEFLAIGIKIQNPVKVEHAYNESFTGKTVVITGSFENYGRTELTQLLKSIGAKVTSSVSKKTDMVICGDNAGSKLTKAQELGVEVILEDNLKDLL</sequence>
<evidence type="ECO:0000255" key="1">
    <source>
        <dbReference type="HAMAP-Rule" id="MF_01588"/>
    </source>
</evidence>
<reference key="1">
    <citation type="journal article" date="2007" name="PLoS ONE">
        <title>Genome sequencing shows that European isolates of Francisella tularensis subspecies tularensis are almost identical to US laboratory strain Schu S4.</title>
        <authorList>
            <person name="Chaudhuri R.R."/>
            <person name="Ren C.-P."/>
            <person name="Desmond L."/>
            <person name="Vincent G.A."/>
            <person name="Silman N.J."/>
            <person name="Brehm J.K."/>
            <person name="Elmore M.J."/>
            <person name="Hudson M.J."/>
            <person name="Forsman M."/>
            <person name="Isherwood K.E."/>
            <person name="Gurycova D."/>
            <person name="Minton N.P."/>
            <person name="Titball R.W."/>
            <person name="Pallen M.J."/>
            <person name="Vipond R."/>
        </authorList>
    </citation>
    <scope>NUCLEOTIDE SEQUENCE [LARGE SCALE GENOMIC DNA]</scope>
    <source>
        <strain>FSC 198</strain>
    </source>
</reference>